<evidence type="ECO:0000255" key="1">
    <source>
        <dbReference type="HAMAP-Rule" id="MF_01416"/>
    </source>
</evidence>
<proteinExistence type="inferred from homology"/>
<protein>
    <recommendedName>
        <fullName evidence="1">ATP synthase subunit delta</fullName>
    </recommendedName>
    <alternativeName>
        <fullName evidence="1">ATP synthase F(1) sector subunit delta</fullName>
    </alternativeName>
    <alternativeName>
        <fullName evidence="1">F-type ATPase subunit delta</fullName>
        <shortName evidence="1">F-ATPase subunit delta</shortName>
    </alternativeName>
</protein>
<organism>
    <name type="scientific">Bifidobacterium longum subsp. infantis (strain ATCC 15697 / DSM 20088 / JCM 1222 / NCTC 11817 / S12)</name>
    <dbReference type="NCBI Taxonomy" id="391904"/>
    <lineage>
        <taxon>Bacteria</taxon>
        <taxon>Bacillati</taxon>
        <taxon>Actinomycetota</taxon>
        <taxon>Actinomycetes</taxon>
        <taxon>Bifidobacteriales</taxon>
        <taxon>Bifidobacteriaceae</taxon>
        <taxon>Bifidobacterium</taxon>
    </lineage>
</organism>
<accession>B7GTZ0</accession>
<accession>E8MP81</accession>
<comment type="function">
    <text evidence="1">F(1)F(0) ATP synthase produces ATP from ADP in the presence of a proton or sodium gradient. F-type ATPases consist of two structural domains, F(1) containing the extramembraneous catalytic core and F(0) containing the membrane proton channel, linked together by a central stalk and a peripheral stalk. During catalysis, ATP synthesis in the catalytic domain of F(1) is coupled via a rotary mechanism of the central stalk subunits to proton translocation.</text>
</comment>
<comment type="function">
    <text evidence="1">This protein is part of the stalk that links CF(0) to CF(1). It either transmits conformational changes from CF(0) to CF(1) or is implicated in proton conduction.</text>
</comment>
<comment type="subunit">
    <text evidence="1">F-type ATPases have 2 components, F(1) - the catalytic core - and F(0) - the membrane proton channel. F(1) has five subunits: alpha(3), beta(3), gamma(1), delta(1), epsilon(1). F(0) has three main subunits: a(1), b(2) and c(10-14). The alpha and beta chains form an alternating ring which encloses part of the gamma chain. F(1) is attached to F(0) by a central stalk formed by the gamma and epsilon chains, while a peripheral stalk is formed by the delta and b chains.</text>
</comment>
<comment type="subcellular location">
    <subcellularLocation>
        <location evidence="1">Cell membrane</location>
        <topology evidence="1">Peripheral membrane protein</topology>
    </subcellularLocation>
</comment>
<comment type="similarity">
    <text evidence="1">Belongs to the ATPase delta chain family.</text>
</comment>
<reference key="1">
    <citation type="journal article" date="2008" name="Proc. Natl. Acad. Sci. U.S.A.">
        <title>The genome sequence of Bifidobacterium longum subsp. infantis reveals adaptations for milk utilization within the infant microbiome.</title>
        <authorList>
            <person name="Sela D.A."/>
            <person name="Chapman J."/>
            <person name="Adeuya A."/>
            <person name="Kim J.H."/>
            <person name="Chen F."/>
            <person name="Whitehead T.R."/>
            <person name="Lapidus A."/>
            <person name="Rokhsar D.S."/>
            <person name="Lebrilla C.B."/>
            <person name="German J.B."/>
            <person name="Price N.P."/>
            <person name="Richardson P.M."/>
            <person name="Mills D.A."/>
        </authorList>
    </citation>
    <scope>NUCLEOTIDE SEQUENCE [LARGE SCALE GENOMIC DNA]</scope>
    <source>
        <strain>ATCC 15697 / DSM 20088 / JCM 1222 / NCTC 11817 / S12</strain>
    </source>
</reference>
<reference key="2">
    <citation type="journal article" date="2011" name="Nature">
        <title>Bifidobacteria can protect from enteropathogenic infection through production of acetate.</title>
        <authorList>
            <person name="Fukuda S."/>
            <person name="Toh H."/>
            <person name="Hase K."/>
            <person name="Oshima K."/>
            <person name="Nakanishi Y."/>
            <person name="Yoshimura K."/>
            <person name="Tobe T."/>
            <person name="Clarke J.M."/>
            <person name="Topping D.L."/>
            <person name="Suzuki T."/>
            <person name="Taylor T.D."/>
            <person name="Itoh K."/>
            <person name="Kikuchi J."/>
            <person name="Morita H."/>
            <person name="Hattori M."/>
            <person name="Ohno H."/>
        </authorList>
    </citation>
    <scope>NUCLEOTIDE SEQUENCE [LARGE SCALE GENOMIC DNA]</scope>
    <source>
        <strain>ATCC 15697 / DSM 20088 / JCM 1222 / NCTC 11817 / S12</strain>
    </source>
</reference>
<name>ATPD_BIFLS</name>
<dbReference type="EMBL" id="CP001095">
    <property type="protein sequence ID" value="ACJ51431.1"/>
    <property type="molecule type" value="Genomic_DNA"/>
</dbReference>
<dbReference type="EMBL" id="AP010889">
    <property type="protein sequence ID" value="BAJ67905.1"/>
    <property type="molecule type" value="Genomic_DNA"/>
</dbReference>
<dbReference type="RefSeq" id="WP_012576741.1">
    <property type="nucleotide sequence ID" value="NZ_JDTT01000024.1"/>
</dbReference>
<dbReference type="SMR" id="B7GTZ0"/>
<dbReference type="KEGG" id="bln:Blon_0306"/>
<dbReference type="KEGG" id="blon:BLIJ_0311"/>
<dbReference type="PATRIC" id="fig|391904.8.peg.314"/>
<dbReference type="HOGENOM" id="CLU_088880_0_0_11"/>
<dbReference type="Proteomes" id="UP000001360">
    <property type="component" value="Chromosome"/>
</dbReference>
<dbReference type="GO" id="GO:0005886">
    <property type="term" value="C:plasma membrane"/>
    <property type="evidence" value="ECO:0007669"/>
    <property type="project" value="UniProtKB-SubCell"/>
</dbReference>
<dbReference type="GO" id="GO:0045259">
    <property type="term" value="C:proton-transporting ATP synthase complex"/>
    <property type="evidence" value="ECO:0007669"/>
    <property type="project" value="UniProtKB-KW"/>
</dbReference>
<dbReference type="GO" id="GO:0046933">
    <property type="term" value="F:proton-transporting ATP synthase activity, rotational mechanism"/>
    <property type="evidence" value="ECO:0007669"/>
    <property type="project" value="UniProtKB-UniRule"/>
</dbReference>
<dbReference type="HAMAP" id="MF_01416">
    <property type="entry name" value="ATP_synth_delta_bact"/>
    <property type="match status" value="1"/>
</dbReference>
<dbReference type="InterPro" id="IPR020781">
    <property type="entry name" value="ATPase_OSCP/d_CS"/>
</dbReference>
<dbReference type="InterPro" id="IPR000711">
    <property type="entry name" value="ATPase_OSCP/dsu"/>
</dbReference>
<dbReference type="NCBIfam" id="NF009967">
    <property type="entry name" value="PRK13430.1"/>
    <property type="match status" value="1"/>
</dbReference>
<dbReference type="PANTHER" id="PTHR11910">
    <property type="entry name" value="ATP SYNTHASE DELTA CHAIN"/>
    <property type="match status" value="1"/>
</dbReference>
<dbReference type="Pfam" id="PF00213">
    <property type="entry name" value="OSCP"/>
    <property type="match status" value="1"/>
</dbReference>
<dbReference type="PRINTS" id="PR00125">
    <property type="entry name" value="ATPASEDELTA"/>
</dbReference>
<dbReference type="PROSITE" id="PS00389">
    <property type="entry name" value="ATPASE_DELTA"/>
    <property type="match status" value="1"/>
</dbReference>
<sequence length="278" mass="31391">MRGEASRIADRESRDSLAPKLRDTREDAWRIGNELFTITKVLDDSIQLERALTDPSRPVADKVAVLTELLGDNVHPMTMEIMTDLVSRHWSRARDIANAVEDFGVDAMMYYADATGATLQVSVELSELHSALLNLPVVRAKLYDYQATSEARVKLFREVFSGKTLNKVTMRLAEHATCNLRRRRYLETIQWMINKFSRHMGESMVTVTTATPLKKEQIKRLVEVYSAKVGRQVHINSVVDPTVLGGMRIQVGDEVTDNTVVAQLQNLHRKVQTEATPA</sequence>
<gene>
    <name evidence="1" type="primary">atpH</name>
    <name type="ordered locus">Blon_0306</name>
    <name type="ordered locus">BLIJ_0311</name>
</gene>
<keyword id="KW-0066">ATP synthesis</keyword>
<keyword id="KW-1003">Cell membrane</keyword>
<keyword id="KW-0139">CF(1)</keyword>
<keyword id="KW-0375">Hydrogen ion transport</keyword>
<keyword id="KW-0406">Ion transport</keyword>
<keyword id="KW-0472">Membrane</keyword>
<keyword id="KW-0813">Transport</keyword>
<feature type="chain" id="PRO_0000382064" description="ATP synthase subunit delta">
    <location>
        <begin position="1"/>
        <end position="278"/>
    </location>
</feature>